<organism>
    <name type="scientific">Cutibacterium acnes (strain DSM 16379 / KPA171202)</name>
    <name type="common">Propionibacterium acnes</name>
    <dbReference type="NCBI Taxonomy" id="267747"/>
    <lineage>
        <taxon>Bacteria</taxon>
        <taxon>Bacillati</taxon>
        <taxon>Actinomycetota</taxon>
        <taxon>Actinomycetes</taxon>
        <taxon>Propionibacteriales</taxon>
        <taxon>Propionibacteriaceae</taxon>
        <taxon>Cutibacterium</taxon>
    </lineage>
</organism>
<keyword id="KW-0067">ATP-binding</keyword>
<keyword id="KW-0418">Kinase</keyword>
<keyword id="KW-0460">Magnesium</keyword>
<keyword id="KW-0479">Metal-binding</keyword>
<keyword id="KW-0547">Nucleotide-binding</keyword>
<keyword id="KW-0784">Thiamine biosynthesis</keyword>
<keyword id="KW-0808">Transferase</keyword>
<accession>Q6A9C5</accession>
<gene>
    <name evidence="1" type="primary">thiM</name>
    <name type="ordered locus">PPA0885</name>
</gene>
<comment type="function">
    <text evidence="1">Catalyzes the phosphorylation of the hydroxyl group of 4-methyl-5-beta-hydroxyethylthiazole (THZ).</text>
</comment>
<comment type="catalytic activity">
    <reaction evidence="1">
        <text>5-(2-hydroxyethyl)-4-methylthiazole + ATP = 4-methyl-5-(2-phosphooxyethyl)-thiazole + ADP + H(+)</text>
        <dbReference type="Rhea" id="RHEA:24212"/>
        <dbReference type="ChEBI" id="CHEBI:15378"/>
        <dbReference type="ChEBI" id="CHEBI:17957"/>
        <dbReference type="ChEBI" id="CHEBI:30616"/>
        <dbReference type="ChEBI" id="CHEBI:58296"/>
        <dbReference type="ChEBI" id="CHEBI:456216"/>
        <dbReference type="EC" id="2.7.1.50"/>
    </reaction>
</comment>
<comment type="cofactor">
    <cofactor evidence="1">
        <name>Mg(2+)</name>
        <dbReference type="ChEBI" id="CHEBI:18420"/>
    </cofactor>
</comment>
<comment type="pathway">
    <text evidence="1">Cofactor biosynthesis; thiamine diphosphate biosynthesis; 4-methyl-5-(2-phosphoethyl)-thiazole from 5-(2-hydroxyethyl)-4-methylthiazole: step 1/1.</text>
</comment>
<comment type="similarity">
    <text evidence="1">Belongs to the Thz kinase family.</text>
</comment>
<comment type="sequence caution" evidence="2">
    <conflict type="erroneous initiation">
        <sequence resource="EMBL-CDS" id="AAT82641"/>
    </conflict>
</comment>
<proteinExistence type="inferred from homology"/>
<name>THIM_CUTAK</name>
<feature type="chain" id="PRO_0000383887" description="Hydroxyethylthiazole kinase">
    <location>
        <begin position="1"/>
        <end position="277"/>
    </location>
</feature>
<feature type="binding site" evidence="1">
    <location>
        <position position="55"/>
    </location>
    <ligand>
        <name>substrate</name>
    </ligand>
</feature>
<feature type="binding site" evidence="1">
    <location>
        <position position="130"/>
    </location>
    <ligand>
        <name>ATP</name>
        <dbReference type="ChEBI" id="CHEBI:30616"/>
    </ligand>
</feature>
<feature type="binding site" evidence="1">
    <location>
        <position position="176"/>
    </location>
    <ligand>
        <name>ATP</name>
        <dbReference type="ChEBI" id="CHEBI:30616"/>
    </ligand>
</feature>
<feature type="binding site" evidence="1">
    <location>
        <position position="203"/>
    </location>
    <ligand>
        <name>substrate</name>
    </ligand>
</feature>
<sequence>MPAKGVVDMTELSNLVAESLERLRRDKPLVQCLTNIVVANFTANVLLSAGAVPAMVDNPEESEGFASIADGVLVNTGTPYRETTEAMIAAARGAASSNTPWVLDPVGVGMSWRTRVVLDTLDVAAPAVIRANASEVLALAGTGASSRGPEAGDAVEDALASATQLVRHYGCVVAISGPVDHILDADRHVTVSSGHEWMTRVTGVGCSLGALTAAFAGIQNDHLIAAVSATAMLCVVAERAAERSAGPGAFAQALVDELFLVSPDEVGERGGLRDVTA</sequence>
<reference key="1">
    <citation type="journal article" date="2004" name="Science">
        <title>The complete genome sequence of Propionibacterium acnes, a commensal of human skin.</title>
        <authorList>
            <person name="Brueggemann H."/>
            <person name="Henne A."/>
            <person name="Hoster F."/>
            <person name="Liesegang H."/>
            <person name="Wiezer A."/>
            <person name="Strittmatter A."/>
            <person name="Hujer S."/>
            <person name="Duerre P."/>
            <person name="Gottschalk G."/>
        </authorList>
    </citation>
    <scope>NUCLEOTIDE SEQUENCE [LARGE SCALE GENOMIC DNA]</scope>
    <source>
        <strain>DSM 16379 / KPA171202</strain>
    </source>
</reference>
<dbReference type="EC" id="2.7.1.50" evidence="1"/>
<dbReference type="EMBL" id="AE017283">
    <property type="protein sequence ID" value="AAT82641.1"/>
    <property type="status" value="ALT_INIT"/>
    <property type="molecule type" value="Genomic_DNA"/>
</dbReference>
<dbReference type="RefSeq" id="WP_002531443.1">
    <property type="nucleotide sequence ID" value="NZ_CP025935.1"/>
</dbReference>
<dbReference type="SMR" id="Q6A9C5"/>
<dbReference type="EnsemblBacteria" id="AAT82641">
    <property type="protein sequence ID" value="AAT82641"/>
    <property type="gene ID" value="PPA0885"/>
</dbReference>
<dbReference type="KEGG" id="pac:PPA0885"/>
<dbReference type="PATRIC" id="fig|267747.3.peg.918"/>
<dbReference type="eggNOG" id="COG2145">
    <property type="taxonomic scope" value="Bacteria"/>
</dbReference>
<dbReference type="HOGENOM" id="CLU_019943_0_1_11"/>
<dbReference type="UniPathway" id="UPA00060">
    <property type="reaction ID" value="UER00139"/>
</dbReference>
<dbReference type="Proteomes" id="UP000000603">
    <property type="component" value="Chromosome"/>
</dbReference>
<dbReference type="GO" id="GO:0005524">
    <property type="term" value="F:ATP binding"/>
    <property type="evidence" value="ECO:0007669"/>
    <property type="project" value="UniProtKB-UniRule"/>
</dbReference>
<dbReference type="GO" id="GO:0004417">
    <property type="term" value="F:hydroxyethylthiazole kinase activity"/>
    <property type="evidence" value="ECO:0007669"/>
    <property type="project" value="UniProtKB-UniRule"/>
</dbReference>
<dbReference type="GO" id="GO:0000287">
    <property type="term" value="F:magnesium ion binding"/>
    <property type="evidence" value="ECO:0007669"/>
    <property type="project" value="UniProtKB-UniRule"/>
</dbReference>
<dbReference type="GO" id="GO:0009228">
    <property type="term" value="P:thiamine biosynthetic process"/>
    <property type="evidence" value="ECO:0007669"/>
    <property type="project" value="UniProtKB-KW"/>
</dbReference>
<dbReference type="GO" id="GO:0009229">
    <property type="term" value="P:thiamine diphosphate biosynthetic process"/>
    <property type="evidence" value="ECO:0007669"/>
    <property type="project" value="UniProtKB-UniRule"/>
</dbReference>
<dbReference type="CDD" id="cd01170">
    <property type="entry name" value="THZ_kinase"/>
    <property type="match status" value="1"/>
</dbReference>
<dbReference type="Gene3D" id="3.40.1190.20">
    <property type="match status" value="1"/>
</dbReference>
<dbReference type="HAMAP" id="MF_00228">
    <property type="entry name" value="Thz_kinase"/>
    <property type="match status" value="1"/>
</dbReference>
<dbReference type="InterPro" id="IPR000417">
    <property type="entry name" value="Hyethyz_kinase"/>
</dbReference>
<dbReference type="InterPro" id="IPR029056">
    <property type="entry name" value="Ribokinase-like"/>
</dbReference>
<dbReference type="NCBIfam" id="NF006830">
    <property type="entry name" value="PRK09355.1"/>
    <property type="match status" value="1"/>
</dbReference>
<dbReference type="Pfam" id="PF02110">
    <property type="entry name" value="HK"/>
    <property type="match status" value="1"/>
</dbReference>
<dbReference type="PIRSF" id="PIRSF000513">
    <property type="entry name" value="Thz_kinase"/>
    <property type="match status" value="1"/>
</dbReference>
<dbReference type="PRINTS" id="PR01099">
    <property type="entry name" value="HYETHTZKNASE"/>
</dbReference>
<dbReference type="SUPFAM" id="SSF53613">
    <property type="entry name" value="Ribokinase-like"/>
    <property type="match status" value="1"/>
</dbReference>
<evidence type="ECO:0000255" key="1">
    <source>
        <dbReference type="HAMAP-Rule" id="MF_00228"/>
    </source>
</evidence>
<evidence type="ECO:0000305" key="2"/>
<protein>
    <recommendedName>
        <fullName evidence="1">Hydroxyethylthiazole kinase</fullName>
        <ecNumber evidence="1">2.7.1.50</ecNumber>
    </recommendedName>
    <alternativeName>
        <fullName evidence="1">4-methyl-5-beta-hydroxyethylthiazole kinase</fullName>
        <shortName evidence="1">TH kinase</shortName>
        <shortName evidence="1">Thz kinase</shortName>
    </alternativeName>
</protein>